<proteinExistence type="inferred from homology"/>
<comment type="similarity">
    <text evidence="1">Belongs to the UPF0145 family.</text>
</comment>
<accession>A1V3G1</accession>
<protein>
    <recommendedName>
        <fullName evidence="1">UPF0145 protein BMASAVP1_A1433</fullName>
    </recommendedName>
</protein>
<organism>
    <name type="scientific">Burkholderia mallei (strain SAVP1)</name>
    <dbReference type="NCBI Taxonomy" id="320388"/>
    <lineage>
        <taxon>Bacteria</taxon>
        <taxon>Pseudomonadati</taxon>
        <taxon>Pseudomonadota</taxon>
        <taxon>Betaproteobacteria</taxon>
        <taxon>Burkholderiales</taxon>
        <taxon>Burkholderiaceae</taxon>
        <taxon>Burkholderia</taxon>
        <taxon>pseudomallei group</taxon>
    </lineage>
</organism>
<name>Y3233_BURMS</name>
<sequence>MADPQLITTAFDIPGYRIERSLGVARGIVVRSRSIVGTFGASIQTLFGGNISLYTSLCERARQDAYERMIDEARRMGGNAIVGMRYDATEIASGVTEVLCYGTAVQAVRAG</sequence>
<reference key="1">
    <citation type="journal article" date="2010" name="Genome Biol. Evol.">
        <title>Continuing evolution of Burkholderia mallei through genome reduction and large-scale rearrangements.</title>
        <authorList>
            <person name="Losada L."/>
            <person name="Ronning C.M."/>
            <person name="DeShazer D."/>
            <person name="Woods D."/>
            <person name="Fedorova N."/>
            <person name="Kim H.S."/>
            <person name="Shabalina S.A."/>
            <person name="Pearson T.R."/>
            <person name="Brinkac L."/>
            <person name="Tan P."/>
            <person name="Nandi T."/>
            <person name="Crabtree J."/>
            <person name="Badger J."/>
            <person name="Beckstrom-Sternberg S."/>
            <person name="Saqib M."/>
            <person name="Schutzer S.E."/>
            <person name="Keim P."/>
            <person name="Nierman W.C."/>
        </authorList>
    </citation>
    <scope>NUCLEOTIDE SEQUENCE [LARGE SCALE GENOMIC DNA]</scope>
    <source>
        <strain>SAVP1</strain>
    </source>
</reference>
<gene>
    <name type="ordered locus">BMASAVP1_A1433</name>
</gene>
<evidence type="ECO:0000255" key="1">
    <source>
        <dbReference type="HAMAP-Rule" id="MF_00338"/>
    </source>
</evidence>
<feature type="chain" id="PRO_1000012981" description="UPF0145 protein BMASAVP1_A1433">
    <location>
        <begin position="1"/>
        <end position="111"/>
    </location>
</feature>
<dbReference type="EMBL" id="CP000526">
    <property type="protein sequence ID" value="ABM49854.1"/>
    <property type="molecule type" value="Genomic_DNA"/>
</dbReference>
<dbReference type="RefSeq" id="WP_004193399.1">
    <property type="nucleotide sequence ID" value="NC_008785.1"/>
</dbReference>
<dbReference type="SMR" id="A1V3G1"/>
<dbReference type="KEGG" id="bmv:BMASAVP1_A1433"/>
<dbReference type="HOGENOM" id="CLU_117144_1_1_4"/>
<dbReference type="Gene3D" id="3.30.110.70">
    <property type="entry name" value="Hypothetical protein apc22750. Chain B"/>
    <property type="match status" value="1"/>
</dbReference>
<dbReference type="HAMAP" id="MF_00338">
    <property type="entry name" value="UPF0145"/>
    <property type="match status" value="1"/>
</dbReference>
<dbReference type="InterPro" id="IPR035439">
    <property type="entry name" value="UPF0145_dom_sf"/>
</dbReference>
<dbReference type="InterPro" id="IPR002765">
    <property type="entry name" value="UPF0145_YbjQ-like"/>
</dbReference>
<dbReference type="PANTHER" id="PTHR34068:SF2">
    <property type="entry name" value="UPF0145 PROTEIN SCO3412"/>
    <property type="match status" value="1"/>
</dbReference>
<dbReference type="PANTHER" id="PTHR34068">
    <property type="entry name" value="UPF0145 PROTEIN YBJQ"/>
    <property type="match status" value="1"/>
</dbReference>
<dbReference type="Pfam" id="PF01906">
    <property type="entry name" value="YbjQ_1"/>
    <property type="match status" value="1"/>
</dbReference>
<dbReference type="SUPFAM" id="SSF117782">
    <property type="entry name" value="YbjQ-like"/>
    <property type="match status" value="1"/>
</dbReference>